<name>DPO13_BPK64</name>
<sequence length="651" mass="71223">MSTELTQAKGSTSRYTSRKSCAIEFNTKIDEVQYISVGLDTSTIKVFIDNNTQIPYVGNFINGNVISWVSDPVKCILTTSSGTYTLFSYGLTKNIPNLLDYDSDSATDDSTRFKKAILAGTESLYIPPREIYKDVMIGELDITSTLRLWGDSGSNINTGGSTIKKIASASYGIHFNGTGQTTRPMGGGLFNLQVRGESSTDTGPLIKVTSWSYMRINNCAIQNISDWGIIARDMMESSCEYTLFRRIGSDTTGILLMDDYIGTPNSNVNNFHFSNNTLGYSSGNWIKSSTNSNPDLIWIERNKFEWDGTPTSANITPKAVIDFGQMSRCRITNNGFTHFTTDHNNYEGILRMRSGCAYLTKLIDNDALSCSGYFGSVEGGKLQASGNFYNRGVVASGNMQFNVTSTRPQSIEPVICFTSNGNITSVGDYIDPNFISAHNMFGTSNNMFQTDTMASLYTTMNVPSLVEIRRFQLGKQYLDSNTVLTIQARVKCVDTAGTNGELKLNIDGTTDIGSSTITASTGWQLITFQLKPSQIGAGSLRFINSGTVSILFDGIYIQRSKYIDWNFAFNPGAIAAGASITSALQSYTDTIGVTGLIQSFSQPKFDGNINGLLCSVVSNNINGSFYVTLYNPTASPITPTITRCYIRLFLI</sequence>
<keyword id="KW-1238">Degradation of host capsule during virus entry</keyword>
<keyword id="KW-1235">Degradation of host cell envelope components during virus entry</keyword>
<keyword id="KW-0945">Host-virus interaction</keyword>
<keyword id="KW-1185">Reference proteome</keyword>
<keyword id="KW-1233">Viral attachment to host adhesion receptor</keyword>
<keyword id="KW-1161">Viral attachment to host cell</keyword>
<keyword id="KW-1227">Viral tail protein</keyword>
<keyword id="KW-0946">Virion</keyword>
<keyword id="KW-1160">Virus entry into host cell</keyword>
<proteinExistence type="inferred from homology"/>
<organismHost>
    <name type="scientific">Klebsiella</name>
    <dbReference type="NCBI Taxonomy" id="570"/>
</organismHost>
<gene>
    <name evidence="5" type="primary">S1-3</name>
</gene>
<evidence type="ECO:0000250" key="1">
    <source>
        <dbReference type="UniProtKB" id="D1L2X1"/>
    </source>
</evidence>
<evidence type="ECO:0000269" key="2">
    <source>
    </source>
</evidence>
<evidence type="ECO:0000305" key="3"/>
<evidence type="ECO:0000305" key="4">
    <source>
    </source>
</evidence>
<evidence type="ECO:0000312" key="5">
    <source>
        <dbReference type="EMBL" id="BAW85693.1"/>
    </source>
</evidence>
<accession>A0A0A8J8S8</accession>
<dbReference type="EMBL" id="AB897757">
    <property type="protein sequence ID" value="BAQ02836.1"/>
    <property type="molecule type" value="Genomic_DNA"/>
</dbReference>
<dbReference type="EMBL" id="LC121099">
    <property type="protein sequence ID" value="BAW85693.1"/>
    <property type="molecule type" value="Genomic_DNA"/>
</dbReference>
<dbReference type="RefSeq" id="YP_009153196.1">
    <property type="nucleotide sequence ID" value="NC_027399.1"/>
</dbReference>
<dbReference type="SMR" id="A0A0A8J8S8"/>
<dbReference type="OrthoDB" id="10542at10239"/>
<dbReference type="Proteomes" id="UP000202478">
    <property type="component" value="Genome"/>
</dbReference>
<dbReference type="GO" id="GO:0098015">
    <property type="term" value="C:virus tail"/>
    <property type="evidence" value="ECO:0007669"/>
    <property type="project" value="UniProtKB-KW"/>
</dbReference>
<dbReference type="GO" id="GO:0098671">
    <property type="term" value="P:adhesion receptor-mediated virion attachment to host cell"/>
    <property type="evidence" value="ECO:0007669"/>
    <property type="project" value="UniProtKB-KW"/>
</dbReference>
<dbReference type="GO" id="GO:0098994">
    <property type="term" value="P:symbiont entry into host cell via disruption of host cell envelope"/>
    <property type="evidence" value="ECO:0007669"/>
    <property type="project" value="UniProtKB-KW"/>
</dbReference>
<dbReference type="GO" id="GO:0098996">
    <property type="term" value="P:symbiont entry into host cell via disruption of host cell glycocalyx"/>
    <property type="evidence" value="ECO:0000314"/>
    <property type="project" value="UniProtKB"/>
</dbReference>
<dbReference type="Gene3D" id="3.30.2020.50">
    <property type="match status" value="1"/>
</dbReference>
<dbReference type="InterPro" id="IPR011050">
    <property type="entry name" value="Pectin_lyase_fold/virulence"/>
</dbReference>
<dbReference type="SUPFAM" id="SSF51126">
    <property type="entry name" value="Pectin lyase-like"/>
    <property type="match status" value="1"/>
</dbReference>
<protein>
    <recommendedName>
        <fullName evidence="3">Depolymerase, capsule K21-specific</fullName>
    </recommendedName>
    <alternativeName>
        <fullName evidence="3">Probable tail spike protein</fullName>
    </alternativeName>
</protein>
<feature type="chain" id="PRO_0000458691" description="Depolymerase, capsule K21-specific">
    <location>
        <begin position="1"/>
        <end position="651"/>
    </location>
</feature>
<feature type="region of interest" description="Catalytic" evidence="1">
    <location>
        <begin position="100"/>
        <end position="428"/>
    </location>
</feature>
<feature type="region of interest" description="Carbohydrate binding" evidence="1">
    <location>
        <begin position="447"/>
        <end position="560"/>
    </location>
</feature>
<feature type="region of interest" description="Lectin-like" evidence="1">
    <location>
        <begin position="561"/>
        <end position="651"/>
    </location>
</feature>
<feature type="active site" evidence="1">
    <location>
        <position position="236"/>
    </location>
</feature>
<feature type="active site" evidence="1">
    <location>
        <position position="295"/>
    </location>
</feature>
<feature type="active site" evidence="1">
    <location>
        <position position="305"/>
    </location>
</feature>
<feature type="active site" evidence="1">
    <location>
        <position position="307"/>
    </location>
</feature>
<reference key="1">
    <citation type="journal article" date="2014" name="Antimicrob. Agents Chemother.">
        <title>Identification of capsular types in carbapenem-resistant Klebsiella pneumoniae strains by wzc sequencing and implications in capsule depolymerase treatment.</title>
        <authorList>
            <person name="Pan Y.-J."/>
            <person name="Lin T.-L."/>
            <person name="Lin Y.-T."/>
            <person name="Su P.-A."/>
            <person name="Chen C.-T."/>
            <person name="Hsieh P.-F."/>
            <person name="Hsu C.-R."/>
            <person name="Chen C.-C."/>
            <person name="Hsieh Y.-C."/>
            <person name="Wang J.-T."/>
        </authorList>
    </citation>
    <scope>NUCLEOTIDE SEQUENCE [LARGE SCALE GENOMIC DNA]</scope>
</reference>
<reference key="2">
    <citation type="journal article" date="2017" name="J. Virol.">
        <title>Klebsiella Phage PhiK64-1 Encodes Multiple Depolymerases for Multiple Host Capsular Types.</title>
        <authorList>
            <person name="Pan Y.-J."/>
            <person name="Lin T.-L."/>
            <person name="Chen C.-C."/>
            <person name="Tsai Y.-T."/>
            <person name="Cheng Y.-H."/>
            <person name="Chen Y.-Y."/>
            <person name="Hsieh P.-F."/>
            <person name="Lin Y.-T."/>
            <person name="Wang J.-T."/>
        </authorList>
    </citation>
    <scope>NUCLEOTIDE SEQUENCE [GENOMIC DNA]</scope>
    <scope>FUNCTION</scope>
</reference>
<reference key="3">
    <citation type="journal article" date="2019" name="Front. Microbiol.">
        <title>Modeling the Architecture of Depolymerase-Containing Receptor Binding Proteins in Klebsiella Phages.</title>
        <authorList>
            <person name="Latka A."/>
            <person name="Leiman P.G."/>
            <person name="Drulis-Kawa Z."/>
            <person name="Briers Y."/>
        </authorList>
    </citation>
    <scope>REVIEW</scope>
</reference>
<comment type="function">
    <text evidence="2 4">Functions as a receptor binding protein (RBP) and probably mediates the attachment to the host capsular exopolysaccharides (Probable). Displays a depolymerase activity that specifically degrades the K21-type polysaccharides of Klebsiella pneumoniae capsule (PubMed:28077636).</text>
</comment>
<comment type="subcellular location">
    <subcellularLocation>
        <location evidence="3">Virion</location>
    </subcellularLocation>
    <text evidence="3">Tail appendage.</text>
</comment>
<comment type="domain">
    <text evidence="1">Consists in a catalytic region, a carbohydrate binding region and a lectin-like region. The active site consists of catalytic dyads Asp-Glu located at the interface between 2 adjacent subunits. The lectin-like region is probably involved in trimerization.</text>
</comment>
<comment type="similarity">
    <text evidence="3">In the C-terminal section; belongs to the K21-specific depolymerase family.</text>
</comment>
<organism>
    <name type="scientific">Klebsiella phage K64-1</name>
    <name type="common">Bacteriophage K64-1</name>
    <dbReference type="NCBI Taxonomy" id="1439894"/>
    <lineage>
        <taxon>Viruses</taxon>
        <taxon>Duplodnaviria</taxon>
        <taxon>Heunggongvirae</taxon>
        <taxon>Uroviricota</taxon>
        <taxon>Caudoviricetes</taxon>
        <taxon>Alcyoneusvirus</taxon>
        <taxon>Alcyoneusvirus K641</taxon>
    </lineage>
</organism>